<keyword id="KW-0028">Amino-acid biosynthesis</keyword>
<keyword id="KW-0963">Cytoplasm</keyword>
<keyword id="KW-0413">Isomerase</keyword>
<keyword id="KW-0486">Methionine biosynthesis</keyword>
<keyword id="KW-0539">Nucleus</keyword>
<keyword id="KW-1185">Reference proteome</keyword>
<evidence type="ECO:0000255" key="1">
    <source>
        <dbReference type="HAMAP-Rule" id="MF_03119"/>
    </source>
</evidence>
<reference key="1">
    <citation type="journal article" date="2011" name="PLoS Genet.">
        <title>Genomic analysis of the necrotrophic fungal pathogens Sclerotinia sclerotiorum and Botrytis cinerea.</title>
        <authorList>
            <person name="Amselem J."/>
            <person name="Cuomo C.A."/>
            <person name="van Kan J.A.L."/>
            <person name="Viaud M."/>
            <person name="Benito E.P."/>
            <person name="Couloux A."/>
            <person name="Coutinho P.M."/>
            <person name="de Vries R.P."/>
            <person name="Dyer P.S."/>
            <person name="Fillinger S."/>
            <person name="Fournier E."/>
            <person name="Gout L."/>
            <person name="Hahn M."/>
            <person name="Kohn L."/>
            <person name="Lapalu N."/>
            <person name="Plummer K.M."/>
            <person name="Pradier J.-M."/>
            <person name="Quevillon E."/>
            <person name="Sharon A."/>
            <person name="Simon A."/>
            <person name="ten Have A."/>
            <person name="Tudzynski B."/>
            <person name="Tudzynski P."/>
            <person name="Wincker P."/>
            <person name="Andrew M."/>
            <person name="Anthouard V."/>
            <person name="Beever R.E."/>
            <person name="Beffa R."/>
            <person name="Benoit I."/>
            <person name="Bouzid O."/>
            <person name="Brault B."/>
            <person name="Chen Z."/>
            <person name="Choquer M."/>
            <person name="Collemare J."/>
            <person name="Cotton P."/>
            <person name="Danchin E.G."/>
            <person name="Da Silva C."/>
            <person name="Gautier A."/>
            <person name="Giraud C."/>
            <person name="Giraud T."/>
            <person name="Gonzalez C."/>
            <person name="Grossetete S."/>
            <person name="Gueldener U."/>
            <person name="Henrissat B."/>
            <person name="Howlett B.J."/>
            <person name="Kodira C."/>
            <person name="Kretschmer M."/>
            <person name="Lappartient A."/>
            <person name="Leroch M."/>
            <person name="Levis C."/>
            <person name="Mauceli E."/>
            <person name="Neuveglise C."/>
            <person name="Oeser B."/>
            <person name="Pearson M."/>
            <person name="Poulain J."/>
            <person name="Poussereau N."/>
            <person name="Quesneville H."/>
            <person name="Rascle C."/>
            <person name="Schumacher J."/>
            <person name="Segurens B."/>
            <person name="Sexton A."/>
            <person name="Silva E."/>
            <person name="Sirven C."/>
            <person name="Soanes D.M."/>
            <person name="Talbot N.J."/>
            <person name="Templeton M."/>
            <person name="Yandava C."/>
            <person name="Yarden O."/>
            <person name="Zeng Q."/>
            <person name="Rollins J.A."/>
            <person name="Lebrun M.-H."/>
            <person name="Dickman M."/>
        </authorList>
    </citation>
    <scope>NUCLEOTIDE SEQUENCE [LARGE SCALE GENOMIC DNA]</scope>
    <source>
        <strain>B05.10</strain>
    </source>
</reference>
<reference key="2">
    <citation type="journal article" date="2012" name="Eukaryot. Cell">
        <title>Genome update of Botrytis cinerea strains B05.10 and T4.</title>
        <authorList>
            <person name="Staats M."/>
            <person name="van Kan J.A.L."/>
        </authorList>
    </citation>
    <scope>NUCLEOTIDE SEQUENCE [LARGE SCALE GENOMIC DNA]</scope>
    <scope>GENOME REANNOTATION</scope>
    <source>
        <strain>B05.10</strain>
    </source>
</reference>
<reference key="3">
    <citation type="journal article" date="2017" name="Mol. Plant Pathol.">
        <title>A gapless genome sequence of the fungus Botrytis cinerea.</title>
        <authorList>
            <person name="van Kan J.A.L."/>
            <person name="Stassen J.H.M."/>
            <person name="Mosbach A."/>
            <person name="van der Lee T.A.J."/>
            <person name="Faino L."/>
            <person name="Farmer A.D."/>
            <person name="Papasotiriou D.G."/>
            <person name="Zhou S."/>
            <person name="Seidl M.F."/>
            <person name="Cottam E."/>
            <person name="Edel D."/>
            <person name="Hahn M."/>
            <person name="Schwartz D.C."/>
            <person name="Dietrich R.A."/>
            <person name="Widdison S."/>
            <person name="Scalliet G."/>
        </authorList>
    </citation>
    <scope>NUCLEOTIDE SEQUENCE [LARGE SCALE GENOMIC DNA]</scope>
    <scope>GENOME REANNOTATION</scope>
    <source>
        <strain>B05.10</strain>
    </source>
</reference>
<dbReference type="EC" id="5.3.1.23" evidence="1"/>
<dbReference type="EMBL" id="CP009805">
    <property type="protein sequence ID" value="ATZ46252.1"/>
    <property type="molecule type" value="Genomic_DNA"/>
</dbReference>
<dbReference type="SMR" id="A6RHT9"/>
<dbReference type="EnsemblFungi" id="Bcin01g08850.1">
    <property type="protein sequence ID" value="Bcin01p08850.1"/>
    <property type="gene ID" value="Bcin01g08850"/>
</dbReference>
<dbReference type="GeneID" id="5441590"/>
<dbReference type="KEGG" id="bfu:BCIN_01g08850"/>
<dbReference type="VEuPathDB" id="FungiDB:Bcin01g08850"/>
<dbReference type="OMA" id="CETRPLN"/>
<dbReference type="OrthoDB" id="2461at2759"/>
<dbReference type="UniPathway" id="UPA00904">
    <property type="reaction ID" value="UER00874"/>
</dbReference>
<dbReference type="Proteomes" id="UP000001798">
    <property type="component" value="Chromosome bcin01"/>
</dbReference>
<dbReference type="GO" id="GO:0005737">
    <property type="term" value="C:cytoplasm"/>
    <property type="evidence" value="ECO:0007669"/>
    <property type="project" value="UniProtKB-SubCell"/>
</dbReference>
<dbReference type="GO" id="GO:0005634">
    <property type="term" value="C:nucleus"/>
    <property type="evidence" value="ECO:0007669"/>
    <property type="project" value="UniProtKB-SubCell"/>
</dbReference>
<dbReference type="GO" id="GO:0046523">
    <property type="term" value="F:S-methyl-5-thioribose-1-phosphate isomerase activity"/>
    <property type="evidence" value="ECO:0007669"/>
    <property type="project" value="UniProtKB-UniRule"/>
</dbReference>
<dbReference type="GO" id="GO:0019509">
    <property type="term" value="P:L-methionine salvage from methylthioadenosine"/>
    <property type="evidence" value="ECO:0007669"/>
    <property type="project" value="UniProtKB-UniRule"/>
</dbReference>
<dbReference type="FunFam" id="1.20.120.420:FF:000006">
    <property type="entry name" value="Methylthioribose-1-phosphate isomerase"/>
    <property type="match status" value="1"/>
</dbReference>
<dbReference type="FunFam" id="3.40.50.10470:FF:000006">
    <property type="entry name" value="Methylthioribose-1-phosphate isomerase"/>
    <property type="match status" value="1"/>
</dbReference>
<dbReference type="Gene3D" id="1.20.120.420">
    <property type="entry name" value="translation initiation factor eif-2b, domain 1"/>
    <property type="match status" value="1"/>
</dbReference>
<dbReference type="Gene3D" id="3.40.50.10470">
    <property type="entry name" value="Translation initiation factor eif-2b, domain 2"/>
    <property type="match status" value="1"/>
</dbReference>
<dbReference type="HAMAP" id="MF_01678">
    <property type="entry name" value="Salvage_MtnA"/>
    <property type="match status" value="1"/>
</dbReference>
<dbReference type="InterPro" id="IPR000649">
    <property type="entry name" value="IF-2B-related"/>
</dbReference>
<dbReference type="InterPro" id="IPR005251">
    <property type="entry name" value="IF-M1Pi"/>
</dbReference>
<dbReference type="InterPro" id="IPR042529">
    <property type="entry name" value="IF_2B-like_C"/>
</dbReference>
<dbReference type="InterPro" id="IPR011559">
    <property type="entry name" value="Initiation_fac_2B_a/b/d"/>
</dbReference>
<dbReference type="InterPro" id="IPR027363">
    <property type="entry name" value="M1Pi_N"/>
</dbReference>
<dbReference type="InterPro" id="IPR037171">
    <property type="entry name" value="NagB/RpiA_transferase-like"/>
</dbReference>
<dbReference type="NCBIfam" id="TIGR00524">
    <property type="entry name" value="eIF-2B_rel"/>
    <property type="match status" value="1"/>
</dbReference>
<dbReference type="NCBIfam" id="NF004326">
    <property type="entry name" value="PRK05720.1"/>
    <property type="match status" value="1"/>
</dbReference>
<dbReference type="NCBIfam" id="TIGR00512">
    <property type="entry name" value="salvage_mtnA"/>
    <property type="match status" value="1"/>
</dbReference>
<dbReference type="PANTHER" id="PTHR43475">
    <property type="entry name" value="METHYLTHIORIBOSE-1-PHOSPHATE ISOMERASE"/>
    <property type="match status" value="1"/>
</dbReference>
<dbReference type="PANTHER" id="PTHR43475:SF1">
    <property type="entry name" value="METHYLTHIORIBOSE-1-PHOSPHATE ISOMERASE"/>
    <property type="match status" value="1"/>
</dbReference>
<dbReference type="Pfam" id="PF01008">
    <property type="entry name" value="IF-2B"/>
    <property type="match status" value="1"/>
</dbReference>
<dbReference type="SUPFAM" id="SSF100950">
    <property type="entry name" value="NagB/RpiA/CoA transferase-like"/>
    <property type="match status" value="1"/>
</dbReference>
<organism>
    <name type="scientific">Botryotinia fuckeliana (strain B05.10)</name>
    <name type="common">Noble rot fungus</name>
    <name type="synonym">Botrytis cinerea</name>
    <dbReference type="NCBI Taxonomy" id="332648"/>
    <lineage>
        <taxon>Eukaryota</taxon>
        <taxon>Fungi</taxon>
        <taxon>Dikarya</taxon>
        <taxon>Ascomycota</taxon>
        <taxon>Pezizomycotina</taxon>
        <taxon>Leotiomycetes</taxon>
        <taxon>Helotiales</taxon>
        <taxon>Sclerotiniaceae</taxon>
        <taxon>Botrytis</taxon>
    </lineage>
</organism>
<protein>
    <recommendedName>
        <fullName evidence="1">Methylthioribose-1-phosphate isomerase</fullName>
        <shortName evidence="1">M1Pi</shortName>
        <shortName evidence="1">MTR-1-P isomerase</shortName>
        <ecNumber evidence="1">5.3.1.23</ecNumber>
    </recommendedName>
    <alternativeName>
        <fullName evidence="1">S-methyl-5-thioribose-1-phosphate isomerase</fullName>
    </alternativeName>
    <alternativeName>
        <fullName evidence="1">Translation initiation factor eIF-2B subunit alpha/beta/delta-like protein</fullName>
    </alternativeName>
</protein>
<sequence>MAGLEAIKYGRGRLEVLDQLRLPHEFVYDNVSTCEEAFDSIKSMRVRGAPAIAIVAALALAVELHHKKDDSKTKQETVQYINKRLDYLLGSRPTAVDLSNAIKLLKRVSQAAAETTGTNDDNAACANVRNGYIVAAEKILEDDLTTNLAIGRYGAEYLRRQQMPIGEENNDDPSKFFTTSPPCTQGAMDKTYRKLSVLTHCNTGSLATSGHGTALGIIRSLHKMNYLDHAYCTETRPYNQGSRLTAFELVYEKIPSTLITDSMAGALFARMKDIKNISAVIVGADRVARNGDTANKIGTYSLAVLAKAHNIKFIVAAPTTSIDLETASGEDIKIEDRAPTELTQISGAVVGKDGHVDVNSTARVAIAHQGINVWNPSFDVTPSMYIDAVITEKGEVVRSSQGTFDFKAIMPERWAQQVEGKEPNGKAQVDDGTLFQMENI</sequence>
<comment type="function">
    <text evidence="1">Catalyzes the interconversion of methylthioribose-1-phosphate (MTR-1-P) into methylthioribulose-1-phosphate (MTRu-1-P).</text>
</comment>
<comment type="catalytic activity">
    <reaction evidence="1">
        <text>5-(methylsulfanyl)-alpha-D-ribose 1-phosphate = 5-(methylsulfanyl)-D-ribulose 1-phosphate</text>
        <dbReference type="Rhea" id="RHEA:19989"/>
        <dbReference type="ChEBI" id="CHEBI:58533"/>
        <dbReference type="ChEBI" id="CHEBI:58548"/>
        <dbReference type="EC" id="5.3.1.23"/>
    </reaction>
</comment>
<comment type="pathway">
    <text evidence="1">Amino-acid biosynthesis; L-methionine biosynthesis via salvage pathway; L-methionine from S-methyl-5-thio-alpha-D-ribose 1-phosphate: step 1/6.</text>
</comment>
<comment type="subcellular location">
    <subcellularLocation>
        <location evidence="1">Cytoplasm</location>
    </subcellularLocation>
    <subcellularLocation>
        <location evidence="1">Nucleus</location>
    </subcellularLocation>
</comment>
<comment type="similarity">
    <text evidence="1">Belongs to the eIF-2B alpha/beta/delta subunits family. MtnA subfamily.</text>
</comment>
<accession>A6RHT9</accession>
<accession>A0A384J734</accession>
<proteinExistence type="inferred from homology"/>
<name>MTNA_BOTFB</name>
<gene>
    <name type="primary">mri1</name>
    <name type="ORF">BC1G_00010</name>
    <name type="ORF">BCIN_01g08850</name>
</gene>
<feature type="chain" id="PRO_0000402017" description="Methylthioribose-1-phosphate isomerase">
    <location>
        <begin position="1"/>
        <end position="440"/>
    </location>
</feature>
<feature type="active site" description="Proton donor" evidence="1">
    <location>
        <position position="285"/>
    </location>
</feature>
<feature type="site" description="Transition state stabilizer" evidence="1">
    <location>
        <position position="201"/>
    </location>
</feature>